<feature type="chain" id="PRO_1000024884" description="Ribonuclease PH">
    <location>
        <begin position="1"/>
        <end position="237"/>
    </location>
</feature>
<feature type="binding site" evidence="1">
    <location>
        <position position="86"/>
    </location>
    <ligand>
        <name>phosphate</name>
        <dbReference type="ChEBI" id="CHEBI:43474"/>
        <note>substrate</note>
    </ligand>
</feature>
<feature type="binding site" evidence="1">
    <location>
        <begin position="124"/>
        <end position="126"/>
    </location>
    <ligand>
        <name>phosphate</name>
        <dbReference type="ChEBI" id="CHEBI:43474"/>
        <note>substrate</note>
    </ligand>
</feature>
<keyword id="KW-0548">Nucleotidyltransferase</keyword>
<keyword id="KW-0694">RNA-binding</keyword>
<keyword id="KW-0698">rRNA processing</keyword>
<keyword id="KW-0808">Transferase</keyword>
<keyword id="KW-0819">tRNA processing</keyword>
<keyword id="KW-0820">tRNA-binding</keyword>
<sequence>MRPSNRTPAQTRPITITRQFTAHAEGSVLVEFGETKVLCTASFTEGVPRFLKGQGQGWVTAEYGMLPRSTHSRMDREAARGKQSGRTQEIQRLIGRALRACVDMKALGENTIVIDCDVIQADGGTRTASITGACVALVDALNWARGKGIIKSNPLKFLIAAVSVGIYKGEAISDLEYIEDSAAETDMNVVMTETGKIIEIQGTAEGEPFTHEELIELLGLAKNSIREIVDVQKAALN</sequence>
<gene>
    <name evidence="1" type="primary">rph</name>
    <name type="ordered locus">Sputcn32_0456</name>
</gene>
<name>RNPH_SHEPC</name>
<organism>
    <name type="scientific">Shewanella putrefaciens (strain CN-32 / ATCC BAA-453)</name>
    <dbReference type="NCBI Taxonomy" id="319224"/>
    <lineage>
        <taxon>Bacteria</taxon>
        <taxon>Pseudomonadati</taxon>
        <taxon>Pseudomonadota</taxon>
        <taxon>Gammaproteobacteria</taxon>
        <taxon>Alteromonadales</taxon>
        <taxon>Shewanellaceae</taxon>
        <taxon>Shewanella</taxon>
    </lineage>
</organism>
<dbReference type="EC" id="2.7.7.56" evidence="1"/>
<dbReference type="EMBL" id="CP000681">
    <property type="protein sequence ID" value="ABP74188.1"/>
    <property type="molecule type" value="Genomic_DNA"/>
</dbReference>
<dbReference type="SMR" id="A4Y2K5"/>
<dbReference type="STRING" id="319224.Sputcn32_0456"/>
<dbReference type="KEGG" id="spc:Sputcn32_0456"/>
<dbReference type="eggNOG" id="COG0689">
    <property type="taxonomic scope" value="Bacteria"/>
</dbReference>
<dbReference type="HOGENOM" id="CLU_050858_0_0_6"/>
<dbReference type="GO" id="GO:0000175">
    <property type="term" value="F:3'-5'-RNA exonuclease activity"/>
    <property type="evidence" value="ECO:0007669"/>
    <property type="project" value="UniProtKB-UniRule"/>
</dbReference>
<dbReference type="GO" id="GO:0000049">
    <property type="term" value="F:tRNA binding"/>
    <property type="evidence" value="ECO:0007669"/>
    <property type="project" value="UniProtKB-UniRule"/>
</dbReference>
<dbReference type="GO" id="GO:0009022">
    <property type="term" value="F:tRNA nucleotidyltransferase activity"/>
    <property type="evidence" value="ECO:0007669"/>
    <property type="project" value="UniProtKB-UniRule"/>
</dbReference>
<dbReference type="GO" id="GO:0016075">
    <property type="term" value="P:rRNA catabolic process"/>
    <property type="evidence" value="ECO:0007669"/>
    <property type="project" value="UniProtKB-UniRule"/>
</dbReference>
<dbReference type="GO" id="GO:0006364">
    <property type="term" value="P:rRNA processing"/>
    <property type="evidence" value="ECO:0007669"/>
    <property type="project" value="UniProtKB-KW"/>
</dbReference>
<dbReference type="GO" id="GO:0008033">
    <property type="term" value="P:tRNA processing"/>
    <property type="evidence" value="ECO:0007669"/>
    <property type="project" value="UniProtKB-UniRule"/>
</dbReference>
<dbReference type="CDD" id="cd11362">
    <property type="entry name" value="RNase_PH_bact"/>
    <property type="match status" value="1"/>
</dbReference>
<dbReference type="FunFam" id="3.30.230.70:FF:000003">
    <property type="entry name" value="Ribonuclease PH"/>
    <property type="match status" value="1"/>
</dbReference>
<dbReference type="Gene3D" id="3.30.230.70">
    <property type="entry name" value="GHMP Kinase, N-terminal domain"/>
    <property type="match status" value="1"/>
</dbReference>
<dbReference type="HAMAP" id="MF_00564">
    <property type="entry name" value="RNase_PH"/>
    <property type="match status" value="1"/>
</dbReference>
<dbReference type="InterPro" id="IPR001247">
    <property type="entry name" value="ExoRNase_PH_dom1"/>
</dbReference>
<dbReference type="InterPro" id="IPR015847">
    <property type="entry name" value="ExoRNase_PH_dom2"/>
</dbReference>
<dbReference type="InterPro" id="IPR036345">
    <property type="entry name" value="ExoRNase_PH_dom2_sf"/>
</dbReference>
<dbReference type="InterPro" id="IPR027408">
    <property type="entry name" value="PNPase/RNase_PH_dom_sf"/>
</dbReference>
<dbReference type="InterPro" id="IPR020568">
    <property type="entry name" value="Ribosomal_Su5_D2-typ_SF"/>
</dbReference>
<dbReference type="InterPro" id="IPR050080">
    <property type="entry name" value="RNase_PH"/>
</dbReference>
<dbReference type="InterPro" id="IPR002381">
    <property type="entry name" value="RNase_PH_bac-type"/>
</dbReference>
<dbReference type="InterPro" id="IPR018336">
    <property type="entry name" value="RNase_PH_CS"/>
</dbReference>
<dbReference type="NCBIfam" id="TIGR01966">
    <property type="entry name" value="RNasePH"/>
    <property type="match status" value="1"/>
</dbReference>
<dbReference type="PANTHER" id="PTHR11953">
    <property type="entry name" value="EXOSOME COMPLEX COMPONENT"/>
    <property type="match status" value="1"/>
</dbReference>
<dbReference type="PANTHER" id="PTHR11953:SF0">
    <property type="entry name" value="EXOSOME COMPLEX COMPONENT RRP41"/>
    <property type="match status" value="1"/>
</dbReference>
<dbReference type="Pfam" id="PF01138">
    <property type="entry name" value="RNase_PH"/>
    <property type="match status" value="1"/>
</dbReference>
<dbReference type="Pfam" id="PF03725">
    <property type="entry name" value="RNase_PH_C"/>
    <property type="match status" value="1"/>
</dbReference>
<dbReference type="SUPFAM" id="SSF55666">
    <property type="entry name" value="Ribonuclease PH domain 2-like"/>
    <property type="match status" value="1"/>
</dbReference>
<dbReference type="SUPFAM" id="SSF54211">
    <property type="entry name" value="Ribosomal protein S5 domain 2-like"/>
    <property type="match status" value="1"/>
</dbReference>
<dbReference type="PROSITE" id="PS01277">
    <property type="entry name" value="RIBONUCLEASE_PH"/>
    <property type="match status" value="1"/>
</dbReference>
<comment type="function">
    <text evidence="1">Phosphorolytic 3'-5' exoribonuclease that plays an important role in tRNA 3'-end maturation. Removes nucleotide residues following the 3'-CCA terminus of tRNAs; can also add nucleotides to the ends of RNA molecules by using nucleoside diphosphates as substrates, but this may not be physiologically important. Probably plays a role in initiation of 16S rRNA degradation (leading to ribosome degradation) during starvation.</text>
</comment>
<comment type="catalytic activity">
    <reaction evidence="1">
        <text>tRNA(n+1) + phosphate = tRNA(n) + a ribonucleoside 5'-diphosphate</text>
        <dbReference type="Rhea" id="RHEA:10628"/>
        <dbReference type="Rhea" id="RHEA-COMP:17343"/>
        <dbReference type="Rhea" id="RHEA-COMP:17344"/>
        <dbReference type="ChEBI" id="CHEBI:43474"/>
        <dbReference type="ChEBI" id="CHEBI:57930"/>
        <dbReference type="ChEBI" id="CHEBI:173114"/>
        <dbReference type="EC" id="2.7.7.56"/>
    </reaction>
</comment>
<comment type="subunit">
    <text evidence="1">Homohexameric ring arranged as a trimer of dimers.</text>
</comment>
<comment type="similarity">
    <text evidence="1">Belongs to the RNase PH family.</text>
</comment>
<accession>A4Y2K5</accession>
<reference key="1">
    <citation type="submission" date="2007-04" db="EMBL/GenBank/DDBJ databases">
        <title>Complete sequence of Shewanella putrefaciens CN-32.</title>
        <authorList>
            <consortium name="US DOE Joint Genome Institute"/>
            <person name="Copeland A."/>
            <person name="Lucas S."/>
            <person name="Lapidus A."/>
            <person name="Barry K."/>
            <person name="Detter J.C."/>
            <person name="Glavina del Rio T."/>
            <person name="Hammon N."/>
            <person name="Israni S."/>
            <person name="Dalin E."/>
            <person name="Tice H."/>
            <person name="Pitluck S."/>
            <person name="Chain P."/>
            <person name="Malfatti S."/>
            <person name="Shin M."/>
            <person name="Vergez L."/>
            <person name="Schmutz J."/>
            <person name="Larimer F."/>
            <person name="Land M."/>
            <person name="Hauser L."/>
            <person name="Kyrpides N."/>
            <person name="Mikhailova N."/>
            <person name="Romine M.F."/>
            <person name="Fredrickson J."/>
            <person name="Tiedje J."/>
            <person name="Richardson P."/>
        </authorList>
    </citation>
    <scope>NUCLEOTIDE SEQUENCE [LARGE SCALE GENOMIC DNA]</scope>
    <source>
        <strain>CN-32 / ATCC BAA-453</strain>
    </source>
</reference>
<protein>
    <recommendedName>
        <fullName evidence="1">Ribonuclease PH</fullName>
        <shortName evidence="1">RNase PH</shortName>
        <ecNumber evidence="1">2.7.7.56</ecNumber>
    </recommendedName>
    <alternativeName>
        <fullName evidence="1">tRNA nucleotidyltransferase</fullName>
    </alternativeName>
</protein>
<proteinExistence type="inferred from homology"/>
<evidence type="ECO:0000255" key="1">
    <source>
        <dbReference type="HAMAP-Rule" id="MF_00564"/>
    </source>
</evidence>